<evidence type="ECO:0000255" key="1">
    <source>
        <dbReference type="HAMAP-Rule" id="MF_01365"/>
    </source>
</evidence>
<evidence type="ECO:0000305" key="2"/>
<feature type="chain" id="PRO_0000265288" description="Large ribosomal subunit protein uL6">
    <location>
        <begin position="1"/>
        <end position="177"/>
    </location>
</feature>
<proteinExistence type="inferred from homology"/>
<comment type="function">
    <text evidence="1">This protein binds to the 23S rRNA, and is important in its secondary structure. It is located near the subunit interface in the base of the L7/L12 stalk, and near the tRNA binding site of the peptidyltransferase center.</text>
</comment>
<comment type="subunit">
    <text evidence="1">Part of the 50S ribosomal subunit.</text>
</comment>
<comment type="similarity">
    <text evidence="1">Belongs to the universal ribosomal protein uL6 family.</text>
</comment>
<gene>
    <name evidence="1" type="primary">rplF</name>
    <name type="ordered locus">RT0636</name>
</gene>
<sequence>MSRVGKLPITIPEGVKVGLNDLEVKISGPKGELSKTFKGNIAIIMEENKLVVKPLAVNKNARSMWGTARSIIYNMVTGVKEGFKLKLEINGVGYRAMVKGKYLNLMLAKSHNTKIEIPSNIKIDLPKQNIILLEGIDKEKLGQFASIIIKQRPPEPYKGKGIKFENKFIQRKEGKKN</sequence>
<organism>
    <name type="scientific">Rickettsia typhi (strain ATCC VR-144 / Wilmington)</name>
    <dbReference type="NCBI Taxonomy" id="257363"/>
    <lineage>
        <taxon>Bacteria</taxon>
        <taxon>Pseudomonadati</taxon>
        <taxon>Pseudomonadota</taxon>
        <taxon>Alphaproteobacteria</taxon>
        <taxon>Rickettsiales</taxon>
        <taxon>Rickettsiaceae</taxon>
        <taxon>Rickettsieae</taxon>
        <taxon>Rickettsia</taxon>
        <taxon>typhus group</taxon>
    </lineage>
</organism>
<protein>
    <recommendedName>
        <fullName evidence="1">Large ribosomal subunit protein uL6</fullName>
    </recommendedName>
    <alternativeName>
        <fullName evidence="2">50S ribosomal protein L6</fullName>
    </alternativeName>
</protein>
<accession>Q68W93</accession>
<name>RL6_RICTY</name>
<reference key="1">
    <citation type="journal article" date="2004" name="J. Bacteriol.">
        <title>Complete genome sequence of Rickettsia typhi and comparison with sequences of other Rickettsiae.</title>
        <authorList>
            <person name="McLeod M.P."/>
            <person name="Qin X."/>
            <person name="Karpathy S.E."/>
            <person name="Gioia J."/>
            <person name="Highlander S.K."/>
            <person name="Fox G.E."/>
            <person name="McNeill T.Z."/>
            <person name="Jiang H."/>
            <person name="Muzny D."/>
            <person name="Jacob L.S."/>
            <person name="Hawes A.C."/>
            <person name="Sodergren E."/>
            <person name="Gill R."/>
            <person name="Hume J."/>
            <person name="Morgan M."/>
            <person name="Fan G."/>
            <person name="Amin A.G."/>
            <person name="Gibbs R.A."/>
            <person name="Hong C."/>
            <person name="Yu X.-J."/>
            <person name="Walker D.H."/>
            <person name="Weinstock G.M."/>
        </authorList>
    </citation>
    <scope>NUCLEOTIDE SEQUENCE [LARGE SCALE GENOMIC DNA]</scope>
    <source>
        <strain>ATCC VR-144 / Wilmington</strain>
    </source>
</reference>
<keyword id="KW-0687">Ribonucleoprotein</keyword>
<keyword id="KW-0689">Ribosomal protein</keyword>
<keyword id="KW-0694">RNA-binding</keyword>
<keyword id="KW-0699">rRNA-binding</keyword>
<dbReference type="EMBL" id="AE017197">
    <property type="protein sequence ID" value="AAU04099.1"/>
    <property type="molecule type" value="Genomic_DNA"/>
</dbReference>
<dbReference type="RefSeq" id="WP_011191078.1">
    <property type="nucleotide sequence ID" value="NC_006142.1"/>
</dbReference>
<dbReference type="SMR" id="Q68W93"/>
<dbReference type="KEGG" id="rty:RT0636"/>
<dbReference type="eggNOG" id="COG0097">
    <property type="taxonomic scope" value="Bacteria"/>
</dbReference>
<dbReference type="HOGENOM" id="CLU_065464_1_2_5"/>
<dbReference type="OrthoDB" id="9805007at2"/>
<dbReference type="Proteomes" id="UP000000604">
    <property type="component" value="Chromosome"/>
</dbReference>
<dbReference type="GO" id="GO:1990904">
    <property type="term" value="C:ribonucleoprotein complex"/>
    <property type="evidence" value="ECO:0007669"/>
    <property type="project" value="UniProtKB-KW"/>
</dbReference>
<dbReference type="GO" id="GO:0005840">
    <property type="term" value="C:ribosome"/>
    <property type="evidence" value="ECO:0007669"/>
    <property type="project" value="UniProtKB-KW"/>
</dbReference>
<dbReference type="GO" id="GO:0019843">
    <property type="term" value="F:rRNA binding"/>
    <property type="evidence" value="ECO:0007669"/>
    <property type="project" value="UniProtKB-UniRule"/>
</dbReference>
<dbReference type="GO" id="GO:0003735">
    <property type="term" value="F:structural constituent of ribosome"/>
    <property type="evidence" value="ECO:0007669"/>
    <property type="project" value="InterPro"/>
</dbReference>
<dbReference type="GO" id="GO:0002181">
    <property type="term" value="P:cytoplasmic translation"/>
    <property type="evidence" value="ECO:0007669"/>
    <property type="project" value="TreeGrafter"/>
</dbReference>
<dbReference type="FunFam" id="3.90.930.12:FF:000002">
    <property type="entry name" value="50S ribosomal protein L6"/>
    <property type="match status" value="1"/>
</dbReference>
<dbReference type="Gene3D" id="3.90.930.12">
    <property type="entry name" value="Ribosomal protein L6, alpha-beta domain"/>
    <property type="match status" value="2"/>
</dbReference>
<dbReference type="HAMAP" id="MF_01365_B">
    <property type="entry name" value="Ribosomal_uL6_B"/>
    <property type="match status" value="1"/>
</dbReference>
<dbReference type="InterPro" id="IPR000702">
    <property type="entry name" value="Ribosomal_uL6-like"/>
</dbReference>
<dbReference type="InterPro" id="IPR036789">
    <property type="entry name" value="Ribosomal_uL6-like_a/b-dom_sf"/>
</dbReference>
<dbReference type="InterPro" id="IPR020040">
    <property type="entry name" value="Ribosomal_uL6_a/b-dom"/>
</dbReference>
<dbReference type="InterPro" id="IPR019906">
    <property type="entry name" value="Ribosomal_uL6_bac-type"/>
</dbReference>
<dbReference type="InterPro" id="IPR002358">
    <property type="entry name" value="Ribosomal_uL6_CS"/>
</dbReference>
<dbReference type="NCBIfam" id="TIGR03654">
    <property type="entry name" value="L6_bact"/>
    <property type="match status" value="1"/>
</dbReference>
<dbReference type="PANTHER" id="PTHR11655">
    <property type="entry name" value="60S/50S RIBOSOMAL PROTEIN L6/L9"/>
    <property type="match status" value="1"/>
</dbReference>
<dbReference type="PANTHER" id="PTHR11655:SF14">
    <property type="entry name" value="LARGE RIBOSOMAL SUBUNIT PROTEIN UL6M"/>
    <property type="match status" value="1"/>
</dbReference>
<dbReference type="Pfam" id="PF00347">
    <property type="entry name" value="Ribosomal_L6"/>
    <property type="match status" value="2"/>
</dbReference>
<dbReference type="PIRSF" id="PIRSF002162">
    <property type="entry name" value="Ribosomal_L6"/>
    <property type="match status" value="1"/>
</dbReference>
<dbReference type="PRINTS" id="PR00059">
    <property type="entry name" value="RIBOSOMALL6"/>
</dbReference>
<dbReference type="SUPFAM" id="SSF56053">
    <property type="entry name" value="Ribosomal protein L6"/>
    <property type="match status" value="2"/>
</dbReference>
<dbReference type="PROSITE" id="PS00525">
    <property type="entry name" value="RIBOSOMAL_L6_1"/>
    <property type="match status" value="1"/>
</dbReference>